<accession>P0CF20</accession>
<accession>D6W1Q7</accession>
<accession>Q08330</accession>
<accession>Q08337</accession>
<reference key="1">
    <citation type="journal article" date="1997" name="Nature">
        <title>The nucleotide sequence of Saccharomyces cerevisiae chromosome XV.</title>
        <authorList>
            <person name="Dujon B."/>
            <person name="Albermann K."/>
            <person name="Aldea M."/>
            <person name="Alexandraki D."/>
            <person name="Ansorge W."/>
            <person name="Arino J."/>
            <person name="Benes V."/>
            <person name="Bohn C."/>
            <person name="Bolotin-Fukuhara M."/>
            <person name="Bordonne R."/>
            <person name="Boyer J."/>
            <person name="Camasses A."/>
            <person name="Casamayor A."/>
            <person name="Casas C."/>
            <person name="Cheret G."/>
            <person name="Cziepluch C."/>
            <person name="Daignan-Fornier B."/>
            <person name="Dang V.-D."/>
            <person name="de Haan M."/>
            <person name="Delius H."/>
            <person name="Durand P."/>
            <person name="Fairhead C."/>
            <person name="Feldmann H."/>
            <person name="Gaillon L."/>
            <person name="Galisson F."/>
            <person name="Gamo F.-J."/>
            <person name="Gancedo C."/>
            <person name="Goffeau A."/>
            <person name="Goulding S.E."/>
            <person name="Grivell L.A."/>
            <person name="Habbig B."/>
            <person name="Hand N.J."/>
            <person name="Hani J."/>
            <person name="Hattenhorst U."/>
            <person name="Hebling U."/>
            <person name="Hernando Y."/>
            <person name="Herrero E."/>
            <person name="Heumann K."/>
            <person name="Hiesel R."/>
            <person name="Hilger F."/>
            <person name="Hofmann B."/>
            <person name="Hollenberg C.P."/>
            <person name="Hughes B."/>
            <person name="Jauniaux J.-C."/>
            <person name="Kalogeropoulos A."/>
            <person name="Katsoulou C."/>
            <person name="Kordes E."/>
            <person name="Lafuente M.J."/>
            <person name="Landt O."/>
            <person name="Louis E.J."/>
            <person name="Maarse A.C."/>
            <person name="Madania A."/>
            <person name="Mannhaupt G."/>
            <person name="Marck C."/>
            <person name="Martin R.P."/>
            <person name="Mewes H.-W."/>
            <person name="Michaux G."/>
            <person name="Paces V."/>
            <person name="Parle-McDermott A.G."/>
            <person name="Pearson B.M."/>
            <person name="Perrin A."/>
            <person name="Pettersson B."/>
            <person name="Poch O."/>
            <person name="Pohl T.M."/>
            <person name="Poirey R."/>
            <person name="Portetelle D."/>
            <person name="Pujol A."/>
            <person name="Purnelle B."/>
            <person name="Ramezani Rad M."/>
            <person name="Rechmann S."/>
            <person name="Schwager C."/>
            <person name="Schweizer M."/>
            <person name="Sor F."/>
            <person name="Sterky F."/>
            <person name="Tarassov I.A."/>
            <person name="Teodoru C."/>
            <person name="Tettelin H."/>
            <person name="Thierry A."/>
            <person name="Tobiasch E."/>
            <person name="Tzermia M."/>
            <person name="Uhlen M."/>
            <person name="Unseld M."/>
            <person name="Valens M."/>
            <person name="Vandenbol M."/>
            <person name="Vetter I."/>
            <person name="Vlcek C."/>
            <person name="Voet M."/>
            <person name="Volckaert G."/>
            <person name="Voss H."/>
            <person name="Wambutt R."/>
            <person name="Wedler H."/>
            <person name="Wiemann S."/>
            <person name="Winsor B."/>
            <person name="Wolfe K.H."/>
            <person name="Zollner A."/>
            <person name="Zumstein E."/>
            <person name="Kleine K."/>
        </authorList>
    </citation>
    <scope>NUCLEOTIDE SEQUENCE [LARGE SCALE GENOMIC DNA]</scope>
    <source>
        <strain>ATCC 204508 / S288c</strain>
    </source>
</reference>
<reference key="2">
    <citation type="journal article" date="2014" name="G3 (Bethesda)">
        <title>The reference genome sequence of Saccharomyces cerevisiae: Then and now.</title>
        <authorList>
            <person name="Engel S.R."/>
            <person name="Dietrich F.S."/>
            <person name="Fisk D.G."/>
            <person name="Binkley G."/>
            <person name="Balakrishnan R."/>
            <person name="Costanzo M.C."/>
            <person name="Dwight S.S."/>
            <person name="Hitz B.C."/>
            <person name="Karra K."/>
            <person name="Nash R.S."/>
            <person name="Weng S."/>
            <person name="Wong E.D."/>
            <person name="Lloyd P."/>
            <person name="Skrzypek M.S."/>
            <person name="Miyasato S.R."/>
            <person name="Simison M."/>
            <person name="Cherry J.M."/>
        </authorList>
    </citation>
    <scope>GENOME REANNOTATION</scope>
    <source>
        <strain>ATCC 204508 / S288c</strain>
    </source>
</reference>
<reference key="3">
    <citation type="journal article" date="2007" name="Genome Res.">
        <title>Approaching a complete repository of sequence-verified protein-encoding clones for Saccharomyces cerevisiae.</title>
        <authorList>
            <person name="Hu Y."/>
            <person name="Rolfs A."/>
            <person name="Bhullar B."/>
            <person name="Murthy T.V.S."/>
            <person name="Zhu C."/>
            <person name="Berger M.F."/>
            <person name="Camargo A.A."/>
            <person name="Kelley F."/>
            <person name="McCarron S."/>
            <person name="Jepson D."/>
            <person name="Richardson A."/>
            <person name="Raphael J."/>
            <person name="Moreira D."/>
            <person name="Taycher E."/>
            <person name="Zuo D."/>
            <person name="Mohr S."/>
            <person name="Kane M.F."/>
            <person name="Williamson J."/>
            <person name="Simpson A.J.G."/>
            <person name="Bulyk M.L."/>
            <person name="Harlow E."/>
            <person name="Marsischky G."/>
            <person name="Kolodner R.D."/>
            <person name="LaBaer J."/>
        </authorList>
    </citation>
    <scope>NUCLEOTIDE SEQUENCE [GENOMIC DNA]</scope>
    <source>
        <strain>ATCC 204508 / S288c</strain>
    </source>
</reference>
<sequence>MIAWSLVATLQCKMTGKSSFYTCRALMGLFEGGFVADLVLWMSYFYSSSELSIRLSFFWVTLSLTQIITSIVAFGVFHMRGIGGMAGWQWLFLIERIFTLVIGISAYFLMVPSVVQTKKPWSKKGWFTEREEKIIVNKILRDDPTKGDMNNRQGMSLKMLWQGITDYYI</sequence>
<feature type="chain" id="PRO_0000393392" description="Putative uncharacterized transporter YOL163W">
    <location>
        <begin position="1"/>
        <end position="169"/>
    </location>
</feature>
<feature type="transmembrane region" description="Helical" evidence="1">
    <location>
        <begin position="25"/>
        <end position="45"/>
    </location>
</feature>
<feature type="transmembrane region" description="Helical" evidence="1">
    <location>
        <begin position="57"/>
        <end position="77"/>
    </location>
</feature>
<feature type="transmembrane region" description="Helical" evidence="1">
    <location>
        <begin position="91"/>
        <end position="111"/>
    </location>
</feature>
<protein>
    <recommendedName>
        <fullName>Putative uncharacterized transporter YOL163W</fullName>
    </recommendedName>
</protein>
<comment type="subcellular location">
    <subcellularLocation>
        <location evidence="2">Membrane</location>
        <topology evidence="2">Multi-pass membrane protein</topology>
    </subcellularLocation>
</comment>
<comment type="similarity">
    <text evidence="2">Belongs to the major facilitator superfamily. Allantoate permease family.</text>
</comment>
<comment type="caution">
    <text evidence="2">Could be the product of a pseudogene. This is a truncated version of an allantoate permease subfamily member protein. Strain S288c has a stop codon in position 170, which disrupts the gene coding for this protein and produces two ORFs YOL163W and YOL162W.</text>
</comment>
<name>YO163_YEAST</name>
<gene>
    <name type="ordered locus">YOL163W</name>
    <name type="ORF">O0230</name>
</gene>
<organism>
    <name type="scientific">Saccharomyces cerevisiae (strain ATCC 204508 / S288c)</name>
    <name type="common">Baker's yeast</name>
    <dbReference type="NCBI Taxonomy" id="559292"/>
    <lineage>
        <taxon>Eukaryota</taxon>
        <taxon>Fungi</taxon>
        <taxon>Dikarya</taxon>
        <taxon>Ascomycota</taxon>
        <taxon>Saccharomycotina</taxon>
        <taxon>Saccharomycetes</taxon>
        <taxon>Saccharomycetales</taxon>
        <taxon>Saccharomycetaceae</taxon>
        <taxon>Saccharomyces</taxon>
    </lineage>
</organism>
<keyword id="KW-0472">Membrane</keyword>
<keyword id="KW-1185">Reference proteome</keyword>
<keyword id="KW-0812">Transmembrane</keyword>
<keyword id="KW-1133">Transmembrane helix</keyword>
<keyword id="KW-0813">Transport</keyword>
<evidence type="ECO:0000255" key="1"/>
<evidence type="ECO:0000305" key="2"/>
<dbReference type="EMBL" id="Z74905">
    <property type="protein sequence ID" value="CAA99185.1"/>
    <property type="molecule type" value="Genomic_DNA"/>
</dbReference>
<dbReference type="EMBL" id="AY692667">
    <property type="protein sequence ID" value="AAT92686.1"/>
    <property type="molecule type" value="Genomic_DNA"/>
</dbReference>
<dbReference type="EMBL" id="BK006948">
    <property type="protein sequence ID" value="DAA10623.1"/>
    <property type="molecule type" value="Genomic_DNA"/>
</dbReference>
<dbReference type="PIR" id="S66862">
    <property type="entry name" value="S66862"/>
</dbReference>
<dbReference type="RefSeq" id="NP_014479.1">
    <property type="nucleotide sequence ID" value="NM_001183416.1"/>
</dbReference>
<dbReference type="BioGRID" id="34255">
    <property type="interactions" value="23"/>
</dbReference>
<dbReference type="FunCoup" id="P0CF20">
    <property type="interactions" value="43"/>
</dbReference>
<dbReference type="STRING" id="4932.YOL163W"/>
<dbReference type="PaxDb" id="4932-YOL163W"/>
<dbReference type="EnsemblFungi" id="YOL163W_mRNA">
    <property type="protein sequence ID" value="YOL163W"/>
    <property type="gene ID" value="YOL163W"/>
</dbReference>
<dbReference type="GeneID" id="854001"/>
<dbReference type="KEGG" id="sce:YOL163W"/>
<dbReference type="AGR" id="SGD:S000005523"/>
<dbReference type="SGD" id="S000005523">
    <property type="gene designation" value="YOL163W"/>
</dbReference>
<dbReference type="VEuPathDB" id="FungiDB:YOL163W"/>
<dbReference type="eggNOG" id="KOG2533">
    <property type="taxonomic scope" value="Eukaryota"/>
</dbReference>
<dbReference type="GeneTree" id="ENSGT00940000176452"/>
<dbReference type="HOGENOM" id="CLU_112733_0_0_1"/>
<dbReference type="InParanoid" id="P0CF20"/>
<dbReference type="OMA" id="QINFASQ"/>
<dbReference type="OrthoDB" id="1935484at2759"/>
<dbReference type="BioCyc" id="YEAST:G3O-33550-MONOMER"/>
<dbReference type="BioGRID-ORCS" id="854001">
    <property type="hits" value="3 hits in 10 CRISPR screens"/>
</dbReference>
<dbReference type="Proteomes" id="UP000002311">
    <property type="component" value="Chromosome XV"/>
</dbReference>
<dbReference type="RNAct" id="P0CF20">
    <property type="molecule type" value="protein"/>
</dbReference>
<dbReference type="GO" id="GO:0016020">
    <property type="term" value="C:membrane"/>
    <property type="evidence" value="ECO:0000250"/>
    <property type="project" value="SGD"/>
</dbReference>
<dbReference type="GO" id="GO:0022857">
    <property type="term" value="F:transmembrane transporter activity"/>
    <property type="evidence" value="ECO:0000255"/>
    <property type="project" value="SGD"/>
</dbReference>
<dbReference type="GO" id="GO:0055085">
    <property type="term" value="P:transmembrane transport"/>
    <property type="evidence" value="ECO:0000255"/>
    <property type="project" value="SGD"/>
</dbReference>
<dbReference type="Gene3D" id="1.20.1250.20">
    <property type="entry name" value="MFS general substrate transporter like domains"/>
    <property type="match status" value="1"/>
</dbReference>
<dbReference type="InterPro" id="IPR036259">
    <property type="entry name" value="MFS_trans_sf"/>
</dbReference>
<dbReference type="PANTHER" id="PTHR43791:SF29">
    <property type="entry name" value="MAJOR FACILITATOR SUPERFAMILY (MFS) PROFILE DOMAIN-CONTAINING PROTEIN"/>
    <property type="match status" value="1"/>
</dbReference>
<dbReference type="PANTHER" id="PTHR43791">
    <property type="entry name" value="PERMEASE-RELATED"/>
    <property type="match status" value="1"/>
</dbReference>
<dbReference type="SUPFAM" id="SSF103473">
    <property type="entry name" value="MFS general substrate transporter"/>
    <property type="match status" value="1"/>
</dbReference>
<proteinExistence type="uncertain"/>